<accession>A6Q772</accession>
<name>TRMD_SULNB</name>
<feature type="chain" id="PRO_1000006532" description="tRNA (guanine-N(1)-)-methyltransferase">
    <location>
        <begin position="1"/>
        <end position="227"/>
    </location>
</feature>
<feature type="binding site" evidence="1">
    <location>
        <position position="112"/>
    </location>
    <ligand>
        <name>S-adenosyl-L-methionine</name>
        <dbReference type="ChEBI" id="CHEBI:59789"/>
    </ligand>
</feature>
<feature type="binding site" evidence="1">
    <location>
        <begin position="132"/>
        <end position="137"/>
    </location>
    <ligand>
        <name>S-adenosyl-L-methionine</name>
        <dbReference type="ChEBI" id="CHEBI:59789"/>
    </ligand>
</feature>
<comment type="function">
    <text evidence="1">Specifically methylates guanosine-37 in various tRNAs.</text>
</comment>
<comment type="catalytic activity">
    <reaction evidence="1">
        <text>guanosine(37) in tRNA + S-adenosyl-L-methionine = N(1)-methylguanosine(37) in tRNA + S-adenosyl-L-homocysteine + H(+)</text>
        <dbReference type="Rhea" id="RHEA:36899"/>
        <dbReference type="Rhea" id="RHEA-COMP:10145"/>
        <dbReference type="Rhea" id="RHEA-COMP:10147"/>
        <dbReference type="ChEBI" id="CHEBI:15378"/>
        <dbReference type="ChEBI" id="CHEBI:57856"/>
        <dbReference type="ChEBI" id="CHEBI:59789"/>
        <dbReference type="ChEBI" id="CHEBI:73542"/>
        <dbReference type="ChEBI" id="CHEBI:74269"/>
        <dbReference type="EC" id="2.1.1.228"/>
    </reaction>
</comment>
<comment type="subunit">
    <text evidence="1">Homodimer.</text>
</comment>
<comment type="subcellular location">
    <subcellularLocation>
        <location evidence="1">Cytoplasm</location>
    </subcellularLocation>
</comment>
<comment type="similarity">
    <text evidence="1">Belongs to the RNA methyltransferase TrmD family.</text>
</comment>
<sequence>MHFSFVTLFPNIIEGYFSDSILKRAIDDGKISIDFYNPRDLTTDKHNRVDAPMIGGGAGMLMTPQPLMDTLSKIKEESPEAHIVFLSPVAKPFIQNDAKRLVKKEHIVFVSGRYEGIDERVIERHADELFSIGDFILTGGELASMVLCDAVARNVEGVLGNSVSLEVESFEASLLEAPSFTKPINYENNEVVSEFLKGNHSKITDLKRGLALCKTKFFRPDLYKKKV</sequence>
<proteinExistence type="inferred from homology"/>
<evidence type="ECO:0000255" key="1">
    <source>
        <dbReference type="HAMAP-Rule" id="MF_00605"/>
    </source>
</evidence>
<dbReference type="EC" id="2.1.1.228" evidence="1"/>
<dbReference type="EMBL" id="AP009179">
    <property type="protein sequence ID" value="BAF71331.1"/>
    <property type="molecule type" value="Genomic_DNA"/>
</dbReference>
<dbReference type="RefSeq" id="WP_011980064.1">
    <property type="nucleotide sequence ID" value="NC_009663.1"/>
</dbReference>
<dbReference type="SMR" id="A6Q772"/>
<dbReference type="STRING" id="387093.SUN_0371"/>
<dbReference type="KEGG" id="sun:SUN_0371"/>
<dbReference type="eggNOG" id="COG0336">
    <property type="taxonomic scope" value="Bacteria"/>
</dbReference>
<dbReference type="HOGENOM" id="CLU_047363_0_1_7"/>
<dbReference type="OrthoDB" id="9807416at2"/>
<dbReference type="Proteomes" id="UP000006378">
    <property type="component" value="Chromosome"/>
</dbReference>
<dbReference type="GO" id="GO:0005829">
    <property type="term" value="C:cytosol"/>
    <property type="evidence" value="ECO:0007669"/>
    <property type="project" value="TreeGrafter"/>
</dbReference>
<dbReference type="GO" id="GO:0052906">
    <property type="term" value="F:tRNA (guanine(37)-N1)-methyltransferase activity"/>
    <property type="evidence" value="ECO:0007669"/>
    <property type="project" value="UniProtKB-UniRule"/>
</dbReference>
<dbReference type="GO" id="GO:0002939">
    <property type="term" value="P:tRNA N1-guanine methylation"/>
    <property type="evidence" value="ECO:0007669"/>
    <property type="project" value="TreeGrafter"/>
</dbReference>
<dbReference type="CDD" id="cd18080">
    <property type="entry name" value="TrmD-like"/>
    <property type="match status" value="1"/>
</dbReference>
<dbReference type="Gene3D" id="3.40.1280.10">
    <property type="match status" value="1"/>
</dbReference>
<dbReference type="Gene3D" id="1.10.1270.20">
    <property type="entry name" value="tRNA(m1g37)methyltransferase, domain 2"/>
    <property type="match status" value="1"/>
</dbReference>
<dbReference type="HAMAP" id="MF_00605">
    <property type="entry name" value="TrmD"/>
    <property type="match status" value="1"/>
</dbReference>
<dbReference type="InterPro" id="IPR029028">
    <property type="entry name" value="Alpha/beta_knot_MTases"/>
</dbReference>
<dbReference type="InterPro" id="IPR023148">
    <property type="entry name" value="tRNA_m1G_MeTrfase_C_sf"/>
</dbReference>
<dbReference type="InterPro" id="IPR002649">
    <property type="entry name" value="tRNA_m1G_MeTrfase_TrmD"/>
</dbReference>
<dbReference type="InterPro" id="IPR029026">
    <property type="entry name" value="tRNA_m1G_MTases_N"/>
</dbReference>
<dbReference type="InterPro" id="IPR016009">
    <property type="entry name" value="tRNA_MeTrfase_TRMD/TRM10"/>
</dbReference>
<dbReference type="NCBIfam" id="NF000648">
    <property type="entry name" value="PRK00026.1"/>
    <property type="match status" value="1"/>
</dbReference>
<dbReference type="NCBIfam" id="TIGR00088">
    <property type="entry name" value="trmD"/>
    <property type="match status" value="1"/>
</dbReference>
<dbReference type="PANTHER" id="PTHR46417">
    <property type="entry name" value="TRNA (GUANINE-N(1)-)-METHYLTRANSFERASE"/>
    <property type="match status" value="1"/>
</dbReference>
<dbReference type="PANTHER" id="PTHR46417:SF1">
    <property type="entry name" value="TRNA (GUANINE-N(1)-)-METHYLTRANSFERASE"/>
    <property type="match status" value="1"/>
</dbReference>
<dbReference type="Pfam" id="PF01746">
    <property type="entry name" value="tRNA_m1G_MT"/>
    <property type="match status" value="1"/>
</dbReference>
<dbReference type="PIRSF" id="PIRSF000386">
    <property type="entry name" value="tRNA_mtase"/>
    <property type="match status" value="1"/>
</dbReference>
<dbReference type="SUPFAM" id="SSF75217">
    <property type="entry name" value="alpha/beta knot"/>
    <property type="match status" value="1"/>
</dbReference>
<organism>
    <name type="scientific">Sulfurovum sp. (strain NBC37-1)</name>
    <dbReference type="NCBI Taxonomy" id="387093"/>
    <lineage>
        <taxon>Bacteria</taxon>
        <taxon>Pseudomonadati</taxon>
        <taxon>Campylobacterota</taxon>
        <taxon>Epsilonproteobacteria</taxon>
        <taxon>Campylobacterales</taxon>
        <taxon>Sulfurovaceae</taxon>
        <taxon>Sulfurovum</taxon>
    </lineage>
</organism>
<protein>
    <recommendedName>
        <fullName evidence="1">tRNA (guanine-N(1)-)-methyltransferase</fullName>
        <ecNumber evidence="1">2.1.1.228</ecNumber>
    </recommendedName>
    <alternativeName>
        <fullName evidence="1">M1G-methyltransferase</fullName>
    </alternativeName>
    <alternativeName>
        <fullName evidence="1">tRNA [GM37] methyltransferase</fullName>
    </alternativeName>
</protein>
<reference key="1">
    <citation type="journal article" date="2007" name="Proc. Natl. Acad. Sci. U.S.A.">
        <title>Deep-sea vent epsilon-proteobacterial genomes provide insights into emergence of pathogens.</title>
        <authorList>
            <person name="Nakagawa S."/>
            <person name="Takaki Y."/>
            <person name="Shimamura S."/>
            <person name="Reysenbach A.-L."/>
            <person name="Takai K."/>
            <person name="Horikoshi K."/>
        </authorList>
    </citation>
    <scope>NUCLEOTIDE SEQUENCE [LARGE SCALE GENOMIC DNA]</scope>
    <source>
        <strain>NBC37-1</strain>
    </source>
</reference>
<keyword id="KW-0963">Cytoplasm</keyword>
<keyword id="KW-0489">Methyltransferase</keyword>
<keyword id="KW-0949">S-adenosyl-L-methionine</keyword>
<keyword id="KW-0808">Transferase</keyword>
<keyword id="KW-0819">tRNA processing</keyword>
<gene>
    <name evidence="1" type="primary">trmD</name>
    <name type="ordered locus">SUN_0371</name>
</gene>